<evidence type="ECO:0000250" key="1">
    <source>
        <dbReference type="UniProtKB" id="Q96DN6"/>
    </source>
</evidence>
<evidence type="ECO:0000255" key="2">
    <source>
        <dbReference type="PROSITE-ProRule" id="PRU00338"/>
    </source>
</evidence>
<evidence type="ECO:0000256" key="3">
    <source>
        <dbReference type="SAM" id="MobiDB-lite"/>
    </source>
</evidence>
<evidence type="ECO:0000269" key="4">
    <source>
    </source>
</evidence>
<evidence type="ECO:0000305" key="5"/>
<accession>Q3TY92</accession>
<accession>E9PWH8</accession>
<protein>
    <recommendedName>
        <fullName>Methyl-CpG-binding domain protein 6</fullName>
    </recommendedName>
    <alternativeName>
        <fullName>Methyl-CpG-binding protein MBD6</fullName>
    </alternativeName>
</protein>
<organism>
    <name type="scientific">Mus musculus</name>
    <name type="common">Mouse</name>
    <dbReference type="NCBI Taxonomy" id="10090"/>
    <lineage>
        <taxon>Eukaryota</taxon>
        <taxon>Metazoa</taxon>
        <taxon>Chordata</taxon>
        <taxon>Craniata</taxon>
        <taxon>Vertebrata</taxon>
        <taxon>Euteleostomi</taxon>
        <taxon>Mammalia</taxon>
        <taxon>Eutheria</taxon>
        <taxon>Euarchontoglires</taxon>
        <taxon>Glires</taxon>
        <taxon>Rodentia</taxon>
        <taxon>Myomorpha</taxon>
        <taxon>Muroidea</taxon>
        <taxon>Muridae</taxon>
        <taxon>Murinae</taxon>
        <taxon>Mus</taxon>
        <taxon>Mus</taxon>
    </lineage>
</organism>
<comment type="function">
    <text evidence="1">Non-catalytic component of the polycomb repressive deubiquitinase (PR-DUB) complex, a complex that specifically mediates deubiquitination of histone H2A monoubiquitinated at 'Lys-120' (H2AK119ub1). Important for stability of PR-DUB components and stimulating its ubiquitinase activity. As part of the PR-DUB complex, associates with chromatin enriched in histone marks H3K4me1, H3K4me3, and H3K27Ac, but not in H3K27me3. MBD5 and MBD6 containing complexes associate with distinct chromatin regions enriched in genes involved in different pathways. Heterochromatin recruitment is not mediated by DNA methylation. The PR-DUB complex is an epigenetic regulator of gene expression, including genes involved in development, cell communication, signaling, cell proliferation and cell viability; may promote cancer cell growth.</text>
</comment>
<comment type="subunit">
    <text evidence="1">Core component of the polycomb repressive deubiquitinase (PR-DUB) complex, at least composed of BAP1, one of ASXL1, ASXL2 or (probably) ASXL3, and one of MBD5 or MBD6. Distinct combinations of ASXL and MBD proteins may preferentially bind specific histone modification marks. The PR-DUB core associates with a number of accessory proteins, including FOXK1, FOXK2, KDM1B, HCFC1 and OGT; KDM1B specifically associates with ASXL2 PR-DUB complexes. Interacts (via MBD domain) with ASXL1, ASXL2 and ASXL3 (via PHD domain); the interaction is probably direct, mediates association with other PR-DUB complex core components.</text>
</comment>
<comment type="subcellular location">
    <subcellularLocation>
        <location evidence="1">Nucleus</location>
    </subcellularLocation>
    <subcellularLocation>
        <location evidence="1">Chromosome</location>
    </subcellularLocation>
    <text evidence="1">Associates with heterochromatin containing chromocentres in a subset of cells in a DNA methylation-independent manner. Localizes to sites of DNA damage independent of the PR-DUB complex.</text>
</comment>
<comment type="tissue specificity">
    <text evidence="4">Expressed at highest levels in adult testis.</text>
</comment>
<comment type="developmental stage">
    <text evidence="4">Detected in embryo from 7 to 17 dpc.</text>
</comment>
<comment type="domain">
    <text evidence="1">Possesses a methyl-binding domain (MBD) that is necessary for chromocentric localization. The MBD may lack methyl-binding activity.</text>
</comment>
<comment type="miscellaneous">
    <text evidence="1">Named 'methyl-CpG-binding domain protein' for homology to other methyl-CpG-binding domain proteins and the presence of an MBD domain, MBD5 and MBD6 may have evolutionarily lost the ability to bind methylated DNA and are recruited to heterochromatin by alternative signals.</text>
</comment>
<feature type="chain" id="PRO_0000406941" description="Methyl-CpG-binding domain protein 6">
    <location>
        <begin position="1"/>
        <end position="1003"/>
    </location>
</feature>
<feature type="domain" description="MBD" evidence="2">
    <location>
        <begin position="13"/>
        <end position="83"/>
    </location>
</feature>
<feature type="region of interest" description="Required for interaction with ASXL1/2/3" evidence="1">
    <location>
        <begin position="59"/>
        <end position="70"/>
    </location>
</feature>
<feature type="region of interest" description="Disordered" evidence="3">
    <location>
        <begin position="123"/>
        <end position="222"/>
    </location>
</feature>
<feature type="region of interest" description="Disordered" evidence="3">
    <location>
        <begin position="241"/>
        <end position="302"/>
    </location>
</feature>
<feature type="region of interest" description="Disordered" evidence="3">
    <location>
        <begin position="334"/>
        <end position="619"/>
    </location>
</feature>
<feature type="region of interest" description="Disordered" evidence="3">
    <location>
        <begin position="631"/>
        <end position="659"/>
    </location>
</feature>
<feature type="region of interest" description="Disordered" evidence="3">
    <location>
        <begin position="684"/>
        <end position="736"/>
    </location>
</feature>
<feature type="region of interest" description="Disordered" evidence="3">
    <location>
        <begin position="753"/>
        <end position="1003"/>
    </location>
</feature>
<feature type="compositionally biased region" description="Pro residues" evidence="3">
    <location>
        <begin position="142"/>
        <end position="157"/>
    </location>
</feature>
<feature type="compositionally biased region" description="Pro residues" evidence="3">
    <location>
        <begin position="168"/>
        <end position="196"/>
    </location>
</feature>
<feature type="compositionally biased region" description="Low complexity" evidence="3">
    <location>
        <begin position="252"/>
        <end position="262"/>
    </location>
</feature>
<feature type="compositionally biased region" description="Pro residues" evidence="3">
    <location>
        <begin position="273"/>
        <end position="293"/>
    </location>
</feature>
<feature type="compositionally biased region" description="Low complexity" evidence="3">
    <location>
        <begin position="351"/>
        <end position="363"/>
    </location>
</feature>
<feature type="compositionally biased region" description="Pro residues" evidence="3">
    <location>
        <begin position="393"/>
        <end position="409"/>
    </location>
</feature>
<feature type="compositionally biased region" description="Low complexity" evidence="3">
    <location>
        <begin position="410"/>
        <end position="428"/>
    </location>
</feature>
<feature type="compositionally biased region" description="Pro residues" evidence="3">
    <location>
        <begin position="441"/>
        <end position="458"/>
    </location>
</feature>
<feature type="compositionally biased region" description="Low complexity" evidence="3">
    <location>
        <begin position="462"/>
        <end position="500"/>
    </location>
</feature>
<feature type="compositionally biased region" description="Low complexity" evidence="3">
    <location>
        <begin position="533"/>
        <end position="550"/>
    </location>
</feature>
<feature type="compositionally biased region" description="Pro residues" evidence="3">
    <location>
        <begin position="571"/>
        <end position="590"/>
    </location>
</feature>
<feature type="compositionally biased region" description="Low complexity" evidence="3">
    <location>
        <begin position="591"/>
        <end position="604"/>
    </location>
</feature>
<feature type="compositionally biased region" description="Pro residues" evidence="3">
    <location>
        <begin position="605"/>
        <end position="618"/>
    </location>
</feature>
<feature type="compositionally biased region" description="Gly residues" evidence="3">
    <location>
        <begin position="636"/>
        <end position="650"/>
    </location>
</feature>
<feature type="compositionally biased region" description="Polar residues" evidence="3">
    <location>
        <begin position="708"/>
        <end position="719"/>
    </location>
</feature>
<feature type="compositionally biased region" description="Low complexity" evidence="3">
    <location>
        <begin position="768"/>
        <end position="798"/>
    </location>
</feature>
<feature type="compositionally biased region" description="Pro residues" evidence="3">
    <location>
        <begin position="805"/>
        <end position="817"/>
    </location>
</feature>
<feature type="compositionally biased region" description="Low complexity" evidence="3">
    <location>
        <begin position="818"/>
        <end position="837"/>
    </location>
</feature>
<feature type="compositionally biased region" description="Basic residues" evidence="3">
    <location>
        <begin position="947"/>
        <end position="958"/>
    </location>
</feature>
<feature type="compositionally biased region" description="Polar residues" evidence="3">
    <location>
        <begin position="960"/>
        <end position="969"/>
    </location>
</feature>
<feature type="compositionally biased region" description="Basic residues" evidence="3">
    <location>
        <begin position="989"/>
        <end position="1003"/>
    </location>
</feature>
<feature type="sequence conflict" description="In Ref. 1; BAE34671." evidence="5" ref="1">
    <original>T</original>
    <variation>S</variation>
    <location>
        <position position="122"/>
    </location>
</feature>
<dbReference type="EMBL" id="AK158797">
    <property type="protein sequence ID" value="BAE34671.1"/>
    <property type="molecule type" value="mRNA"/>
</dbReference>
<dbReference type="EMBL" id="AC144852">
    <property type="status" value="NOT_ANNOTATED_CDS"/>
    <property type="molecule type" value="Genomic_DNA"/>
</dbReference>
<dbReference type="CCDS" id="CCDS83762.1"/>
<dbReference type="RefSeq" id="NP_001334100.1">
    <property type="nucleotide sequence ID" value="NM_001347171.1"/>
</dbReference>
<dbReference type="RefSeq" id="NP_149063.2">
    <property type="nucleotide sequence ID" value="NM_033072.3"/>
</dbReference>
<dbReference type="SMR" id="Q3TY92"/>
<dbReference type="FunCoup" id="Q3TY92">
    <property type="interactions" value="1785"/>
</dbReference>
<dbReference type="STRING" id="10090.ENSMUSP00000026476"/>
<dbReference type="GlyGen" id="Q3TY92">
    <property type="glycosylation" value="3 sites"/>
</dbReference>
<dbReference type="iPTMnet" id="Q3TY92"/>
<dbReference type="PhosphoSitePlus" id="Q3TY92"/>
<dbReference type="PaxDb" id="10090-ENSMUSP00000026476"/>
<dbReference type="ProteomicsDB" id="252740"/>
<dbReference type="Antibodypedia" id="50110">
    <property type="antibodies" value="49 antibodies from 15 providers"/>
</dbReference>
<dbReference type="DNASU" id="110962"/>
<dbReference type="Ensembl" id="ENSMUST00000119078.8">
    <property type="protein sequence ID" value="ENSMUSP00000112805.2"/>
    <property type="gene ID" value="ENSMUSG00000025409.15"/>
</dbReference>
<dbReference type="GeneID" id="110962"/>
<dbReference type="KEGG" id="mmu:110962"/>
<dbReference type="UCSC" id="uc007hix.1">
    <property type="organism name" value="mouse"/>
</dbReference>
<dbReference type="AGR" id="MGI:106378"/>
<dbReference type="CTD" id="114785"/>
<dbReference type="MGI" id="MGI:106378">
    <property type="gene designation" value="Mbd6"/>
</dbReference>
<dbReference type="VEuPathDB" id="HostDB:ENSMUSG00000025409"/>
<dbReference type="eggNOG" id="ENOG502QR6I">
    <property type="taxonomic scope" value="Eukaryota"/>
</dbReference>
<dbReference type="GeneTree" id="ENSGT00530000064137"/>
<dbReference type="InParanoid" id="Q3TY92"/>
<dbReference type="OrthoDB" id="641149at2759"/>
<dbReference type="Reactome" id="R-MMU-5689603">
    <property type="pathway name" value="UCH proteinases"/>
</dbReference>
<dbReference type="BioGRID-ORCS" id="110962">
    <property type="hits" value="8 hits in 82 CRISPR screens"/>
</dbReference>
<dbReference type="ChiTaRS" id="Mbd6">
    <property type="organism name" value="mouse"/>
</dbReference>
<dbReference type="PRO" id="PR:Q3TY92"/>
<dbReference type="Proteomes" id="UP000000589">
    <property type="component" value="Chromosome 10"/>
</dbReference>
<dbReference type="RNAct" id="Q3TY92">
    <property type="molecule type" value="protein"/>
</dbReference>
<dbReference type="Bgee" id="ENSMUSG00000025409">
    <property type="expression patterns" value="Expressed in floor plate of midbrain and 251 other cell types or tissues"/>
</dbReference>
<dbReference type="ExpressionAtlas" id="Q3TY92">
    <property type="expression patterns" value="baseline and differential"/>
</dbReference>
<dbReference type="GO" id="GO:0005694">
    <property type="term" value="C:chromosome"/>
    <property type="evidence" value="ECO:0007669"/>
    <property type="project" value="UniProtKB-SubCell"/>
</dbReference>
<dbReference type="GO" id="GO:0005634">
    <property type="term" value="C:nucleus"/>
    <property type="evidence" value="ECO:0007669"/>
    <property type="project" value="UniProtKB-SubCell"/>
</dbReference>
<dbReference type="GO" id="GO:0003682">
    <property type="term" value="F:chromatin binding"/>
    <property type="evidence" value="ECO:0000250"/>
    <property type="project" value="UniProtKB"/>
</dbReference>
<dbReference type="InterPro" id="IPR016177">
    <property type="entry name" value="DNA-bd_dom_sf"/>
</dbReference>
<dbReference type="InterPro" id="IPR001739">
    <property type="entry name" value="Methyl_CpG_DNA-bd"/>
</dbReference>
<dbReference type="PANTHER" id="PTHR16112">
    <property type="entry name" value="METHYL-CPG BINDING PROTEIN, DROSOPHILA"/>
    <property type="match status" value="1"/>
</dbReference>
<dbReference type="PANTHER" id="PTHR16112:SF17">
    <property type="entry name" value="METHYL-CPG-BINDING DOMAIN PROTEIN 6"/>
    <property type="match status" value="1"/>
</dbReference>
<dbReference type="PRINTS" id="PR01217">
    <property type="entry name" value="PRICHEXTENSN"/>
</dbReference>
<dbReference type="SMART" id="SM00391">
    <property type="entry name" value="MBD"/>
    <property type="match status" value="1"/>
</dbReference>
<dbReference type="SUPFAM" id="SSF54171">
    <property type="entry name" value="DNA-binding domain"/>
    <property type="match status" value="1"/>
</dbReference>
<dbReference type="PROSITE" id="PS50982">
    <property type="entry name" value="MBD"/>
    <property type="match status" value="1"/>
</dbReference>
<gene>
    <name type="primary">Mbd6</name>
</gene>
<reference key="1">
    <citation type="journal article" date="2005" name="Science">
        <title>The transcriptional landscape of the mammalian genome.</title>
        <authorList>
            <person name="Carninci P."/>
            <person name="Kasukawa T."/>
            <person name="Katayama S."/>
            <person name="Gough J."/>
            <person name="Frith M.C."/>
            <person name="Maeda N."/>
            <person name="Oyama R."/>
            <person name="Ravasi T."/>
            <person name="Lenhard B."/>
            <person name="Wells C."/>
            <person name="Kodzius R."/>
            <person name="Shimokawa K."/>
            <person name="Bajic V.B."/>
            <person name="Brenner S.E."/>
            <person name="Batalov S."/>
            <person name="Forrest A.R."/>
            <person name="Zavolan M."/>
            <person name="Davis M.J."/>
            <person name="Wilming L.G."/>
            <person name="Aidinis V."/>
            <person name="Allen J.E."/>
            <person name="Ambesi-Impiombato A."/>
            <person name="Apweiler R."/>
            <person name="Aturaliya R.N."/>
            <person name="Bailey T.L."/>
            <person name="Bansal M."/>
            <person name="Baxter L."/>
            <person name="Beisel K.W."/>
            <person name="Bersano T."/>
            <person name="Bono H."/>
            <person name="Chalk A.M."/>
            <person name="Chiu K.P."/>
            <person name="Choudhary V."/>
            <person name="Christoffels A."/>
            <person name="Clutterbuck D.R."/>
            <person name="Crowe M.L."/>
            <person name="Dalla E."/>
            <person name="Dalrymple B.P."/>
            <person name="de Bono B."/>
            <person name="Della Gatta G."/>
            <person name="di Bernardo D."/>
            <person name="Down T."/>
            <person name="Engstrom P."/>
            <person name="Fagiolini M."/>
            <person name="Faulkner G."/>
            <person name="Fletcher C.F."/>
            <person name="Fukushima T."/>
            <person name="Furuno M."/>
            <person name="Futaki S."/>
            <person name="Gariboldi M."/>
            <person name="Georgii-Hemming P."/>
            <person name="Gingeras T.R."/>
            <person name="Gojobori T."/>
            <person name="Green R.E."/>
            <person name="Gustincich S."/>
            <person name="Harbers M."/>
            <person name="Hayashi Y."/>
            <person name="Hensch T.K."/>
            <person name="Hirokawa N."/>
            <person name="Hill D."/>
            <person name="Huminiecki L."/>
            <person name="Iacono M."/>
            <person name="Ikeo K."/>
            <person name="Iwama A."/>
            <person name="Ishikawa T."/>
            <person name="Jakt M."/>
            <person name="Kanapin A."/>
            <person name="Katoh M."/>
            <person name="Kawasawa Y."/>
            <person name="Kelso J."/>
            <person name="Kitamura H."/>
            <person name="Kitano H."/>
            <person name="Kollias G."/>
            <person name="Krishnan S.P."/>
            <person name="Kruger A."/>
            <person name="Kummerfeld S.K."/>
            <person name="Kurochkin I.V."/>
            <person name="Lareau L.F."/>
            <person name="Lazarevic D."/>
            <person name="Lipovich L."/>
            <person name="Liu J."/>
            <person name="Liuni S."/>
            <person name="McWilliam S."/>
            <person name="Madan Babu M."/>
            <person name="Madera M."/>
            <person name="Marchionni L."/>
            <person name="Matsuda H."/>
            <person name="Matsuzawa S."/>
            <person name="Miki H."/>
            <person name="Mignone F."/>
            <person name="Miyake S."/>
            <person name="Morris K."/>
            <person name="Mottagui-Tabar S."/>
            <person name="Mulder N."/>
            <person name="Nakano N."/>
            <person name="Nakauchi H."/>
            <person name="Ng P."/>
            <person name="Nilsson R."/>
            <person name="Nishiguchi S."/>
            <person name="Nishikawa S."/>
            <person name="Nori F."/>
            <person name="Ohara O."/>
            <person name="Okazaki Y."/>
            <person name="Orlando V."/>
            <person name="Pang K.C."/>
            <person name="Pavan W.J."/>
            <person name="Pavesi G."/>
            <person name="Pesole G."/>
            <person name="Petrovsky N."/>
            <person name="Piazza S."/>
            <person name="Reed J."/>
            <person name="Reid J.F."/>
            <person name="Ring B.Z."/>
            <person name="Ringwald M."/>
            <person name="Rost B."/>
            <person name="Ruan Y."/>
            <person name="Salzberg S.L."/>
            <person name="Sandelin A."/>
            <person name="Schneider C."/>
            <person name="Schoenbach C."/>
            <person name="Sekiguchi K."/>
            <person name="Semple C.A."/>
            <person name="Seno S."/>
            <person name="Sessa L."/>
            <person name="Sheng Y."/>
            <person name="Shibata Y."/>
            <person name="Shimada H."/>
            <person name="Shimada K."/>
            <person name="Silva D."/>
            <person name="Sinclair B."/>
            <person name="Sperling S."/>
            <person name="Stupka E."/>
            <person name="Sugiura K."/>
            <person name="Sultana R."/>
            <person name="Takenaka Y."/>
            <person name="Taki K."/>
            <person name="Tammoja K."/>
            <person name="Tan S.L."/>
            <person name="Tang S."/>
            <person name="Taylor M.S."/>
            <person name="Tegner J."/>
            <person name="Teichmann S.A."/>
            <person name="Ueda H.R."/>
            <person name="van Nimwegen E."/>
            <person name="Verardo R."/>
            <person name="Wei C.L."/>
            <person name="Yagi K."/>
            <person name="Yamanishi H."/>
            <person name="Zabarovsky E."/>
            <person name="Zhu S."/>
            <person name="Zimmer A."/>
            <person name="Hide W."/>
            <person name="Bult C."/>
            <person name="Grimmond S.M."/>
            <person name="Teasdale R.D."/>
            <person name="Liu E.T."/>
            <person name="Brusic V."/>
            <person name="Quackenbush J."/>
            <person name="Wahlestedt C."/>
            <person name="Mattick J.S."/>
            <person name="Hume D.A."/>
            <person name="Kai C."/>
            <person name="Sasaki D."/>
            <person name="Tomaru Y."/>
            <person name="Fukuda S."/>
            <person name="Kanamori-Katayama M."/>
            <person name="Suzuki M."/>
            <person name="Aoki J."/>
            <person name="Arakawa T."/>
            <person name="Iida J."/>
            <person name="Imamura K."/>
            <person name="Itoh M."/>
            <person name="Kato T."/>
            <person name="Kawaji H."/>
            <person name="Kawagashira N."/>
            <person name="Kawashima T."/>
            <person name="Kojima M."/>
            <person name="Kondo S."/>
            <person name="Konno H."/>
            <person name="Nakano K."/>
            <person name="Ninomiya N."/>
            <person name="Nishio T."/>
            <person name="Okada M."/>
            <person name="Plessy C."/>
            <person name="Shibata K."/>
            <person name="Shiraki T."/>
            <person name="Suzuki S."/>
            <person name="Tagami M."/>
            <person name="Waki K."/>
            <person name="Watahiki A."/>
            <person name="Okamura-Oho Y."/>
            <person name="Suzuki H."/>
            <person name="Kawai J."/>
            <person name="Hayashizaki Y."/>
        </authorList>
    </citation>
    <scope>NUCLEOTIDE SEQUENCE [LARGE SCALE MRNA]</scope>
    <source>
        <strain>C57BL/6J</strain>
        <tissue>Visual cortex</tissue>
    </source>
</reference>
<reference key="2">
    <citation type="journal article" date="2009" name="PLoS Biol.">
        <title>Lineage-specific biology revealed by a finished genome assembly of the mouse.</title>
        <authorList>
            <person name="Church D.M."/>
            <person name="Goodstadt L."/>
            <person name="Hillier L.W."/>
            <person name="Zody M.C."/>
            <person name="Goldstein S."/>
            <person name="She X."/>
            <person name="Bult C.J."/>
            <person name="Agarwala R."/>
            <person name="Cherry J.L."/>
            <person name="DiCuccio M."/>
            <person name="Hlavina W."/>
            <person name="Kapustin Y."/>
            <person name="Meric P."/>
            <person name="Maglott D."/>
            <person name="Birtle Z."/>
            <person name="Marques A.C."/>
            <person name="Graves T."/>
            <person name="Zhou S."/>
            <person name="Teague B."/>
            <person name="Potamousis K."/>
            <person name="Churas C."/>
            <person name="Place M."/>
            <person name="Herschleb J."/>
            <person name="Runnheim R."/>
            <person name="Forrest D."/>
            <person name="Amos-Landgraf J."/>
            <person name="Schwartz D.C."/>
            <person name="Cheng Z."/>
            <person name="Lindblad-Toh K."/>
            <person name="Eichler E.E."/>
            <person name="Ponting C.P."/>
        </authorList>
    </citation>
    <scope>NUCLEOTIDE SEQUENCE [LARGE SCALE GENOMIC DNA]</scope>
    <source>
        <strain>C57BL/6J</strain>
    </source>
</reference>
<reference key="3">
    <citation type="journal article" date="2010" name="PLoS ONE">
        <title>The human proteins MBD5 and MBD6 associate with heterochromatin but they do not bind methylated DNA.</title>
        <authorList>
            <person name="Laget S."/>
            <person name="Joulie M."/>
            <person name="Le Masson F."/>
            <person name="Sasai N."/>
            <person name="Christians E."/>
            <person name="Pradhan S."/>
            <person name="Roberts R.J."/>
            <person name="Defossez P.A."/>
        </authorList>
    </citation>
    <scope>TISSUE SPECIFICITY</scope>
    <scope>DEVELOPMENTAL STAGE</scope>
</reference>
<sequence>MNGDNASSAADRAGGPAATPVPIPIGWQRCVREGAVYYISPSGTELSSLEQTRSYLLSDGTCKCGLECPLNVPKVFNFDPLAPVTPGGAGVGPASEEDMTKLCNHRRKAVAMATLYRSMETTCSHSSPGEGASPQMFHTVSPGPPSVRPPCRAPPTTPLNGGPGSIPQDPPSVPQAFPPLTGPAGLFPPPRLPDPVPSAGSSSPCFLPRGNAPSPAPPPPPAISLNAPSYNWGASLRSNLVPSDLGSPPAPHASSSPPSDSPLFHCSDALTSPPLPPSNNPPGPPGPPGPATQPPVSSATMHLPLVLGSLGGAPAVEGPGAPPFLASSLLSAAAKAQLPPPSTLQGRRPRAQAPSAAHASPRPSQRRPRRPPTVLRLLEGGGPQTPRRTRPRAPAPVPQPFPLPEPSQPILPSVLSLLGLPTPGPSHSDGSFNLLGSDAHLPPPPALSSGSPPQPRHPIQPSLPGTTSGSLSSVPGAPAPPAASKAPVVPSPVLQSPSDGLGMGAGPACPLPPLAGGEAFPFPSPEQGLALSGAGFPGMLGALPLPLSLGQPPPSPFLSHSLFGVLAGGGQPPPEPLLPPPGGPGPPSAPGEPEGPSLLVASLLSPPPSDLLPPPSAPPSNLLASFLPLLALGPTAGDGEGSAEGAGGPNGEPFSGLGDLPPLLFPPLSAPPTLIALNSALLAASLDPPSGTPPQPCVLSAPQPGPPTSSVTTATTDPGASSLGKAPSNSGRPQLLSPLLSASLLGDLSSLASSPGALPSLLQPPGPLLSSQLGLQLLPGGGAPPALSEASSPLACLLQSLQIPPEQPDAPCLPPESPASALEPEPARPPLSALAPPHASPDPPVPELLTGRGSGKRGRRGGGGLRGINGETRPGRGRKPGSRREPGRLALKWGTRGGFNGQMERSPRRTHHWQHNGELAEGGAEPKDPPLPGTHSEDLKVPPGIVRKSRRGRRRKYNPARNSSSSRQDVTLEPSPTTRAAVPLPPRARPGRPAKNKRRKLAP</sequence>
<proteinExistence type="evidence at transcript level"/>
<name>MBD6_MOUSE</name>
<keyword id="KW-0158">Chromosome</keyword>
<keyword id="KW-0539">Nucleus</keyword>
<keyword id="KW-1185">Reference proteome</keyword>
<keyword id="KW-0833">Ubl conjugation pathway</keyword>